<dbReference type="EC" id="1.4.4.2" evidence="1"/>
<dbReference type="EMBL" id="AE016828">
    <property type="protein sequence ID" value="AAO91208.1"/>
    <property type="molecule type" value="Genomic_DNA"/>
</dbReference>
<dbReference type="RefSeq" id="NP_820694.1">
    <property type="nucleotide sequence ID" value="NC_002971.3"/>
</dbReference>
<dbReference type="RefSeq" id="WP_010958389.1">
    <property type="nucleotide sequence ID" value="NC_002971.4"/>
</dbReference>
<dbReference type="SMR" id="Q83B09"/>
<dbReference type="STRING" id="227377.CBU_1713"/>
<dbReference type="EnsemblBacteria" id="AAO91208">
    <property type="protein sequence ID" value="AAO91208"/>
    <property type="gene ID" value="CBU_1713"/>
</dbReference>
<dbReference type="GeneID" id="1209624"/>
<dbReference type="KEGG" id="cbu:CBU_1713"/>
<dbReference type="PATRIC" id="fig|227377.7.peg.1697"/>
<dbReference type="eggNOG" id="COG1003">
    <property type="taxonomic scope" value="Bacteria"/>
</dbReference>
<dbReference type="HOGENOM" id="CLU_004620_5_0_6"/>
<dbReference type="OrthoDB" id="9801272at2"/>
<dbReference type="Proteomes" id="UP000002671">
    <property type="component" value="Chromosome"/>
</dbReference>
<dbReference type="GO" id="GO:0005829">
    <property type="term" value="C:cytosol"/>
    <property type="evidence" value="ECO:0000318"/>
    <property type="project" value="GO_Central"/>
</dbReference>
<dbReference type="GO" id="GO:0005960">
    <property type="term" value="C:glycine cleavage complex"/>
    <property type="evidence" value="ECO:0000318"/>
    <property type="project" value="GO_Central"/>
</dbReference>
<dbReference type="GO" id="GO:0016594">
    <property type="term" value="F:glycine binding"/>
    <property type="evidence" value="ECO:0000318"/>
    <property type="project" value="GO_Central"/>
</dbReference>
<dbReference type="GO" id="GO:0004375">
    <property type="term" value="F:glycine dehydrogenase (decarboxylating) activity"/>
    <property type="evidence" value="ECO:0000318"/>
    <property type="project" value="GO_Central"/>
</dbReference>
<dbReference type="GO" id="GO:0030170">
    <property type="term" value="F:pyridoxal phosphate binding"/>
    <property type="evidence" value="ECO:0000318"/>
    <property type="project" value="GO_Central"/>
</dbReference>
<dbReference type="GO" id="GO:0019464">
    <property type="term" value="P:glycine decarboxylation via glycine cleavage system"/>
    <property type="evidence" value="ECO:0000318"/>
    <property type="project" value="GO_Central"/>
</dbReference>
<dbReference type="CDD" id="cd00613">
    <property type="entry name" value="GDC-P"/>
    <property type="match status" value="1"/>
</dbReference>
<dbReference type="FunFam" id="3.40.640.10:FF:000034">
    <property type="entry name" value="Probable glycine dehydrogenase (decarboxylating) subunit 2"/>
    <property type="match status" value="1"/>
</dbReference>
<dbReference type="FunFam" id="3.90.1150.10:FF:000014">
    <property type="entry name" value="Probable glycine dehydrogenase (decarboxylating) subunit 2"/>
    <property type="match status" value="1"/>
</dbReference>
<dbReference type="Gene3D" id="6.20.440.10">
    <property type="match status" value="1"/>
</dbReference>
<dbReference type="Gene3D" id="3.90.1150.10">
    <property type="entry name" value="Aspartate Aminotransferase, domain 1"/>
    <property type="match status" value="1"/>
</dbReference>
<dbReference type="Gene3D" id="3.40.640.10">
    <property type="entry name" value="Type I PLP-dependent aspartate aminotransferase-like (Major domain)"/>
    <property type="match status" value="1"/>
</dbReference>
<dbReference type="HAMAP" id="MF_00713">
    <property type="entry name" value="GcvPB"/>
    <property type="match status" value="1"/>
</dbReference>
<dbReference type="InterPro" id="IPR023012">
    <property type="entry name" value="GcvPB"/>
</dbReference>
<dbReference type="InterPro" id="IPR049316">
    <property type="entry name" value="GDC-P_C"/>
</dbReference>
<dbReference type="InterPro" id="IPR049315">
    <property type="entry name" value="GDC-P_N"/>
</dbReference>
<dbReference type="InterPro" id="IPR020581">
    <property type="entry name" value="GDC_P"/>
</dbReference>
<dbReference type="InterPro" id="IPR015424">
    <property type="entry name" value="PyrdxlP-dep_Trfase"/>
</dbReference>
<dbReference type="InterPro" id="IPR015421">
    <property type="entry name" value="PyrdxlP-dep_Trfase_major"/>
</dbReference>
<dbReference type="InterPro" id="IPR015422">
    <property type="entry name" value="PyrdxlP-dep_Trfase_small"/>
</dbReference>
<dbReference type="NCBIfam" id="NF003346">
    <property type="entry name" value="PRK04366.1"/>
    <property type="match status" value="1"/>
</dbReference>
<dbReference type="PANTHER" id="PTHR11773:SF1">
    <property type="entry name" value="GLYCINE DEHYDROGENASE (DECARBOXYLATING), MITOCHONDRIAL"/>
    <property type="match status" value="1"/>
</dbReference>
<dbReference type="PANTHER" id="PTHR11773">
    <property type="entry name" value="GLYCINE DEHYDROGENASE, DECARBOXYLATING"/>
    <property type="match status" value="1"/>
</dbReference>
<dbReference type="Pfam" id="PF21478">
    <property type="entry name" value="GcvP2_C"/>
    <property type="match status" value="1"/>
</dbReference>
<dbReference type="Pfam" id="PF02347">
    <property type="entry name" value="GDC-P"/>
    <property type="match status" value="1"/>
</dbReference>
<dbReference type="SUPFAM" id="SSF53383">
    <property type="entry name" value="PLP-dependent transferases"/>
    <property type="match status" value="1"/>
</dbReference>
<name>GCSPB_COXBU</name>
<sequence>MLIFEKSRKNRRTLAHAIADKMDANDIPANLLRHDAPRLPELSELEVVRHFTRLSTQNFSIDTHFYPLGSCTMKYNPRAANRLASLPGYLKRHPLSPAPQSQAFLQCLYELQTMLTEITGMEKISLTSMAGAQGEFAGVAMIKAYHESRGDYDRTEMIVPDAAHGTNPASAAMCGFTVKEISTTKDGDIDLEKLRQMAGAKTAGIMLTNPSTLGVFERQISEVAKIIHNAGGLLYYDGANLNAILGKYRPGDMGFDVMHLNLHKTFATPHGGGGPGAGPVAAGPRLSKFLPVPMVGKNKEGYDWLTEKECPKSIGRLSAFMGNSGVLLRAYIYLRLLGKEGLSRVAEFSTLNANYLMKRLEQLGFTLAFPNRRASHEFIITLKPLTRAYGVTALDIAKRLLDYGFHAPTIYFPLLVPECLLIEPTETESKQTLDHFIEAMEKILTEIKTTPDLLRNAPHQQLINRLDEVKAARELDLRWYPIAKETEIFIQ</sequence>
<organism>
    <name type="scientific">Coxiella burnetii (strain RSA 493 / Nine Mile phase I)</name>
    <dbReference type="NCBI Taxonomy" id="227377"/>
    <lineage>
        <taxon>Bacteria</taxon>
        <taxon>Pseudomonadati</taxon>
        <taxon>Pseudomonadota</taxon>
        <taxon>Gammaproteobacteria</taxon>
        <taxon>Legionellales</taxon>
        <taxon>Coxiellaceae</taxon>
        <taxon>Coxiella</taxon>
    </lineage>
</organism>
<feature type="chain" id="PRO_0000167004" description="Probable glycine dehydrogenase (decarboxylating) subunit 2">
    <location>
        <begin position="1"/>
        <end position="491"/>
    </location>
</feature>
<feature type="modified residue" description="N6-(pyridoxal phosphate)lysine" evidence="1">
    <location>
        <position position="264"/>
    </location>
</feature>
<proteinExistence type="inferred from homology"/>
<keyword id="KW-0560">Oxidoreductase</keyword>
<keyword id="KW-0663">Pyridoxal phosphate</keyword>
<keyword id="KW-1185">Reference proteome</keyword>
<gene>
    <name evidence="1" type="primary">gcvPB</name>
    <name type="ordered locus">CBU_1713</name>
</gene>
<accession>Q83B09</accession>
<comment type="function">
    <text evidence="1">The glycine cleavage system catalyzes the degradation of glycine. The P protein binds the alpha-amino group of glycine through its pyridoxal phosphate cofactor; CO(2) is released and the remaining methylamine moiety is then transferred to the lipoamide cofactor of the H protein.</text>
</comment>
<comment type="catalytic activity">
    <reaction evidence="1">
        <text>N(6)-[(R)-lipoyl]-L-lysyl-[glycine-cleavage complex H protein] + glycine + H(+) = N(6)-[(R)-S(8)-aminomethyldihydrolipoyl]-L-lysyl-[glycine-cleavage complex H protein] + CO2</text>
        <dbReference type="Rhea" id="RHEA:24304"/>
        <dbReference type="Rhea" id="RHEA-COMP:10494"/>
        <dbReference type="Rhea" id="RHEA-COMP:10495"/>
        <dbReference type="ChEBI" id="CHEBI:15378"/>
        <dbReference type="ChEBI" id="CHEBI:16526"/>
        <dbReference type="ChEBI" id="CHEBI:57305"/>
        <dbReference type="ChEBI" id="CHEBI:83099"/>
        <dbReference type="ChEBI" id="CHEBI:83143"/>
        <dbReference type="EC" id="1.4.4.2"/>
    </reaction>
</comment>
<comment type="cofactor">
    <cofactor evidence="1">
        <name>pyridoxal 5'-phosphate</name>
        <dbReference type="ChEBI" id="CHEBI:597326"/>
    </cofactor>
</comment>
<comment type="subunit">
    <text evidence="1">The glycine cleavage system is composed of four proteins: P, T, L and H. In this organism, the P 'protein' is a heterodimer of two subunits.</text>
</comment>
<comment type="similarity">
    <text evidence="1">Belongs to the GcvP family. C-terminal subunit subfamily.</text>
</comment>
<reference key="1">
    <citation type="journal article" date="2003" name="Proc. Natl. Acad. Sci. U.S.A.">
        <title>Complete genome sequence of the Q-fever pathogen, Coxiella burnetii.</title>
        <authorList>
            <person name="Seshadri R."/>
            <person name="Paulsen I.T."/>
            <person name="Eisen J.A."/>
            <person name="Read T.D."/>
            <person name="Nelson K.E."/>
            <person name="Nelson W.C."/>
            <person name="Ward N.L."/>
            <person name="Tettelin H."/>
            <person name="Davidsen T.M."/>
            <person name="Beanan M.J."/>
            <person name="DeBoy R.T."/>
            <person name="Daugherty S.C."/>
            <person name="Brinkac L.M."/>
            <person name="Madupu R."/>
            <person name="Dodson R.J."/>
            <person name="Khouri H.M."/>
            <person name="Lee K.H."/>
            <person name="Carty H.A."/>
            <person name="Scanlan D."/>
            <person name="Heinzen R.A."/>
            <person name="Thompson H.A."/>
            <person name="Samuel J.E."/>
            <person name="Fraser C.M."/>
            <person name="Heidelberg J.F."/>
        </authorList>
    </citation>
    <scope>NUCLEOTIDE SEQUENCE [LARGE SCALE GENOMIC DNA]</scope>
    <source>
        <strain>RSA 493 / Nine Mile phase I</strain>
    </source>
</reference>
<protein>
    <recommendedName>
        <fullName evidence="1">Probable glycine dehydrogenase (decarboxylating) subunit 2</fullName>
        <ecNumber evidence="1">1.4.4.2</ecNumber>
    </recommendedName>
    <alternativeName>
        <fullName evidence="1">Glycine cleavage system P-protein subunit 2</fullName>
    </alternativeName>
    <alternativeName>
        <fullName evidence="1">Glycine decarboxylase subunit 2</fullName>
    </alternativeName>
    <alternativeName>
        <fullName evidence="1">Glycine dehydrogenase (aminomethyl-transferring) subunit 2</fullName>
    </alternativeName>
</protein>
<evidence type="ECO:0000255" key="1">
    <source>
        <dbReference type="HAMAP-Rule" id="MF_00713"/>
    </source>
</evidence>